<feature type="chain" id="PRO_1000077908" description="UvrABC system protein B">
    <location>
        <begin position="1"/>
        <end position="679"/>
    </location>
</feature>
<feature type="domain" description="Helicase ATP-binding" evidence="1">
    <location>
        <begin position="25"/>
        <end position="176"/>
    </location>
</feature>
<feature type="domain" description="Helicase C-terminal" evidence="1">
    <location>
        <begin position="429"/>
        <end position="583"/>
    </location>
</feature>
<feature type="domain" description="UVR" evidence="1">
    <location>
        <begin position="639"/>
        <end position="674"/>
    </location>
</feature>
<feature type="short sequence motif" description="Beta-hairpin">
    <location>
        <begin position="91"/>
        <end position="114"/>
    </location>
</feature>
<feature type="binding site" evidence="1">
    <location>
        <begin position="38"/>
        <end position="45"/>
    </location>
    <ligand>
        <name>ATP</name>
        <dbReference type="ChEBI" id="CHEBI:30616"/>
    </ligand>
</feature>
<proteinExistence type="inferred from homology"/>
<sequence length="679" mass="77317">MNNYKLQAPYEPNGDQPEAIKKLVKGVNTGKEFQTLLGATGTGKTFTIANVIQQTGRPALVLAHNKTLAAQLCNELREFFPKNAVEYFISYYDYYQPEAYVPVSDTYIAKTASINEEIDMLRHSATRSLFERKDVIVVASISCIYGLGIPSEYLKAAVKFEVGKSINLRSYLRSLVENQYTRNDIEITRGRFRIKGDVLEIGPAYEDRLIRIELFGDEVEAIRYVDPTTGEILESLEQVSVYPAKHFVTPKERLESAISAIRSELKTQLDKFTYEGKLLEAQRLEQRTKYDLEMLKEVGYCNGVENYARHLSGREEGSPPECLIDYFPKDWLLVVDESHVTCPQLHAMYNGDQSRKKVLIDHGFRLPSAADNRPLKCEEFWEKSKQTLFISATPGQWELDQCDGEFIEQVIRPTGVLDPVIDVRPSEGQIEDLLSEIRIRAEKNQRVLVTTLTKRMAEDLTDFLSENKVRVRYLHSEIHSIERIEIIQDLRMGEYDVLVGVNLLREGLDLPEVSLVAILDADKEGFLRAERSLIQTIGRAARHVEGVALLYADNFTDSMKRAISETERRRTIQKKYNQVNGITPKPAGKKIENSILSFLELSRKLDAGGLSKDLINIVNNKTDAILGSSDNQCLLEELPDLIEKLEIKMKDAAKELNFEEAANLRDRIKKLRQKLARNN</sequence>
<gene>
    <name evidence="1" type="primary">uvrB</name>
    <name type="ordered locus">P9301_18391</name>
</gene>
<accession>A3PFD7</accession>
<keyword id="KW-0067">ATP-binding</keyword>
<keyword id="KW-0963">Cytoplasm</keyword>
<keyword id="KW-0227">DNA damage</keyword>
<keyword id="KW-0228">DNA excision</keyword>
<keyword id="KW-0234">DNA repair</keyword>
<keyword id="KW-0267">Excision nuclease</keyword>
<keyword id="KW-0347">Helicase</keyword>
<keyword id="KW-0378">Hydrolase</keyword>
<keyword id="KW-0547">Nucleotide-binding</keyword>
<keyword id="KW-1185">Reference proteome</keyword>
<keyword id="KW-0742">SOS response</keyword>
<reference key="1">
    <citation type="journal article" date="2007" name="PLoS Genet.">
        <title>Patterns and implications of gene gain and loss in the evolution of Prochlorococcus.</title>
        <authorList>
            <person name="Kettler G.C."/>
            <person name="Martiny A.C."/>
            <person name="Huang K."/>
            <person name="Zucker J."/>
            <person name="Coleman M.L."/>
            <person name="Rodrigue S."/>
            <person name="Chen F."/>
            <person name="Lapidus A."/>
            <person name="Ferriera S."/>
            <person name="Johnson J."/>
            <person name="Steglich C."/>
            <person name="Church G.M."/>
            <person name="Richardson P."/>
            <person name="Chisholm S.W."/>
        </authorList>
    </citation>
    <scope>NUCLEOTIDE SEQUENCE [LARGE SCALE GENOMIC DNA]</scope>
    <source>
        <strain>MIT 9301</strain>
    </source>
</reference>
<protein>
    <recommendedName>
        <fullName evidence="1">UvrABC system protein B</fullName>
        <shortName evidence="1">Protein UvrB</shortName>
    </recommendedName>
    <alternativeName>
        <fullName evidence="1">Excinuclease ABC subunit B</fullName>
    </alternativeName>
</protein>
<evidence type="ECO:0000255" key="1">
    <source>
        <dbReference type="HAMAP-Rule" id="MF_00204"/>
    </source>
</evidence>
<name>UVRB_PROM0</name>
<dbReference type="EMBL" id="CP000576">
    <property type="protein sequence ID" value="ABO18462.1"/>
    <property type="molecule type" value="Genomic_DNA"/>
</dbReference>
<dbReference type="RefSeq" id="WP_011863746.1">
    <property type="nucleotide sequence ID" value="NC_009091.1"/>
</dbReference>
<dbReference type="SMR" id="A3PFD7"/>
<dbReference type="STRING" id="167546.P9301_18391"/>
<dbReference type="KEGG" id="pmg:P9301_18391"/>
<dbReference type="eggNOG" id="COG0556">
    <property type="taxonomic scope" value="Bacteria"/>
</dbReference>
<dbReference type="HOGENOM" id="CLU_009621_2_1_3"/>
<dbReference type="OrthoDB" id="9806651at2"/>
<dbReference type="Proteomes" id="UP000001430">
    <property type="component" value="Chromosome"/>
</dbReference>
<dbReference type="GO" id="GO:0005737">
    <property type="term" value="C:cytoplasm"/>
    <property type="evidence" value="ECO:0007669"/>
    <property type="project" value="UniProtKB-SubCell"/>
</dbReference>
<dbReference type="GO" id="GO:0009380">
    <property type="term" value="C:excinuclease repair complex"/>
    <property type="evidence" value="ECO:0007669"/>
    <property type="project" value="InterPro"/>
</dbReference>
<dbReference type="GO" id="GO:0005524">
    <property type="term" value="F:ATP binding"/>
    <property type="evidence" value="ECO:0007669"/>
    <property type="project" value="UniProtKB-UniRule"/>
</dbReference>
<dbReference type="GO" id="GO:0016887">
    <property type="term" value="F:ATP hydrolysis activity"/>
    <property type="evidence" value="ECO:0007669"/>
    <property type="project" value="InterPro"/>
</dbReference>
<dbReference type="GO" id="GO:0003677">
    <property type="term" value="F:DNA binding"/>
    <property type="evidence" value="ECO:0007669"/>
    <property type="project" value="UniProtKB-UniRule"/>
</dbReference>
<dbReference type="GO" id="GO:0009381">
    <property type="term" value="F:excinuclease ABC activity"/>
    <property type="evidence" value="ECO:0007669"/>
    <property type="project" value="UniProtKB-UniRule"/>
</dbReference>
<dbReference type="GO" id="GO:0004386">
    <property type="term" value="F:helicase activity"/>
    <property type="evidence" value="ECO:0007669"/>
    <property type="project" value="UniProtKB-KW"/>
</dbReference>
<dbReference type="GO" id="GO:0006289">
    <property type="term" value="P:nucleotide-excision repair"/>
    <property type="evidence" value="ECO:0007669"/>
    <property type="project" value="UniProtKB-UniRule"/>
</dbReference>
<dbReference type="GO" id="GO:0009432">
    <property type="term" value="P:SOS response"/>
    <property type="evidence" value="ECO:0007669"/>
    <property type="project" value="UniProtKB-UniRule"/>
</dbReference>
<dbReference type="CDD" id="cd17916">
    <property type="entry name" value="DEXHc_UvrB"/>
    <property type="match status" value="1"/>
</dbReference>
<dbReference type="CDD" id="cd18790">
    <property type="entry name" value="SF2_C_UvrB"/>
    <property type="match status" value="1"/>
</dbReference>
<dbReference type="Gene3D" id="3.40.50.300">
    <property type="entry name" value="P-loop containing nucleotide triphosphate hydrolases"/>
    <property type="match status" value="3"/>
</dbReference>
<dbReference type="Gene3D" id="4.10.860.10">
    <property type="entry name" value="UVR domain"/>
    <property type="match status" value="1"/>
</dbReference>
<dbReference type="HAMAP" id="MF_00204">
    <property type="entry name" value="UvrB"/>
    <property type="match status" value="1"/>
</dbReference>
<dbReference type="InterPro" id="IPR006935">
    <property type="entry name" value="Helicase/UvrB_N"/>
</dbReference>
<dbReference type="InterPro" id="IPR014001">
    <property type="entry name" value="Helicase_ATP-bd"/>
</dbReference>
<dbReference type="InterPro" id="IPR001650">
    <property type="entry name" value="Helicase_C-like"/>
</dbReference>
<dbReference type="InterPro" id="IPR027417">
    <property type="entry name" value="P-loop_NTPase"/>
</dbReference>
<dbReference type="InterPro" id="IPR001943">
    <property type="entry name" value="UVR_dom"/>
</dbReference>
<dbReference type="InterPro" id="IPR036876">
    <property type="entry name" value="UVR_dom_sf"/>
</dbReference>
<dbReference type="InterPro" id="IPR004807">
    <property type="entry name" value="UvrB"/>
</dbReference>
<dbReference type="InterPro" id="IPR041471">
    <property type="entry name" value="UvrB_inter"/>
</dbReference>
<dbReference type="InterPro" id="IPR024759">
    <property type="entry name" value="UvrB_YAD/RRR_dom"/>
</dbReference>
<dbReference type="NCBIfam" id="NF003673">
    <property type="entry name" value="PRK05298.1"/>
    <property type="match status" value="1"/>
</dbReference>
<dbReference type="NCBIfam" id="TIGR00631">
    <property type="entry name" value="uvrb"/>
    <property type="match status" value="1"/>
</dbReference>
<dbReference type="PANTHER" id="PTHR24029">
    <property type="entry name" value="UVRABC SYSTEM PROTEIN B"/>
    <property type="match status" value="1"/>
</dbReference>
<dbReference type="PANTHER" id="PTHR24029:SF0">
    <property type="entry name" value="UVRABC SYSTEM PROTEIN B"/>
    <property type="match status" value="1"/>
</dbReference>
<dbReference type="Pfam" id="PF00271">
    <property type="entry name" value="Helicase_C"/>
    <property type="match status" value="1"/>
</dbReference>
<dbReference type="Pfam" id="PF04851">
    <property type="entry name" value="ResIII"/>
    <property type="match status" value="1"/>
</dbReference>
<dbReference type="Pfam" id="PF02151">
    <property type="entry name" value="UVR"/>
    <property type="match status" value="1"/>
</dbReference>
<dbReference type="Pfam" id="PF12344">
    <property type="entry name" value="UvrB"/>
    <property type="match status" value="1"/>
</dbReference>
<dbReference type="Pfam" id="PF17757">
    <property type="entry name" value="UvrB_inter"/>
    <property type="match status" value="1"/>
</dbReference>
<dbReference type="SMART" id="SM00487">
    <property type="entry name" value="DEXDc"/>
    <property type="match status" value="1"/>
</dbReference>
<dbReference type="SMART" id="SM00490">
    <property type="entry name" value="HELICc"/>
    <property type="match status" value="1"/>
</dbReference>
<dbReference type="SUPFAM" id="SSF46600">
    <property type="entry name" value="C-terminal UvrC-binding domain of UvrB"/>
    <property type="match status" value="1"/>
</dbReference>
<dbReference type="SUPFAM" id="SSF52540">
    <property type="entry name" value="P-loop containing nucleoside triphosphate hydrolases"/>
    <property type="match status" value="2"/>
</dbReference>
<dbReference type="PROSITE" id="PS51192">
    <property type="entry name" value="HELICASE_ATP_BIND_1"/>
    <property type="match status" value="1"/>
</dbReference>
<dbReference type="PROSITE" id="PS51194">
    <property type="entry name" value="HELICASE_CTER"/>
    <property type="match status" value="1"/>
</dbReference>
<dbReference type="PROSITE" id="PS50151">
    <property type="entry name" value="UVR"/>
    <property type="match status" value="1"/>
</dbReference>
<comment type="function">
    <text evidence="1">The UvrABC repair system catalyzes the recognition and processing of DNA lesions. A damage recognition complex composed of 2 UvrA and 2 UvrB subunits scans DNA for abnormalities. Upon binding of the UvrA(2)B(2) complex to a putative damaged site, the DNA wraps around one UvrB monomer. DNA wrap is dependent on ATP binding by UvrB and probably causes local melting of the DNA helix, facilitating insertion of UvrB beta-hairpin between the DNA strands. Then UvrB probes one DNA strand for the presence of a lesion. If a lesion is found the UvrA subunits dissociate and the UvrB-DNA preincision complex is formed. This complex is subsequently bound by UvrC and the second UvrB is released. If no lesion is found, the DNA wraps around the other UvrB subunit that will check the other stand for damage.</text>
</comment>
<comment type="subunit">
    <text evidence="1">Forms a heterotetramer with UvrA during the search for lesions. Interacts with UvrC in an incision complex.</text>
</comment>
<comment type="subcellular location">
    <subcellularLocation>
        <location evidence="1">Cytoplasm</location>
    </subcellularLocation>
</comment>
<comment type="domain">
    <text evidence="1">The beta-hairpin motif is involved in DNA binding.</text>
</comment>
<comment type="similarity">
    <text evidence="1">Belongs to the UvrB family.</text>
</comment>
<organism>
    <name type="scientific">Prochlorococcus marinus (strain MIT 9301)</name>
    <dbReference type="NCBI Taxonomy" id="167546"/>
    <lineage>
        <taxon>Bacteria</taxon>
        <taxon>Bacillati</taxon>
        <taxon>Cyanobacteriota</taxon>
        <taxon>Cyanophyceae</taxon>
        <taxon>Synechococcales</taxon>
        <taxon>Prochlorococcaceae</taxon>
        <taxon>Prochlorococcus</taxon>
    </lineage>
</organism>